<name>MIAA_OCEIH</name>
<proteinExistence type="inferred from homology"/>
<reference key="1">
    <citation type="journal article" date="2002" name="Nucleic Acids Res.">
        <title>Genome sequence of Oceanobacillus iheyensis isolated from the Iheya Ridge and its unexpected adaptive capabilities to extreme environments.</title>
        <authorList>
            <person name="Takami H."/>
            <person name="Takaki Y."/>
            <person name="Uchiyama I."/>
        </authorList>
    </citation>
    <scope>NUCLEOTIDE SEQUENCE [LARGE SCALE GENOMIC DNA]</scope>
    <source>
        <strain>DSM 14371 / CIP 107618 / JCM 11309 / KCTC 3954 / HTE831</strain>
    </source>
</reference>
<evidence type="ECO:0000255" key="1">
    <source>
        <dbReference type="HAMAP-Rule" id="MF_00185"/>
    </source>
</evidence>
<feature type="chain" id="PRO_0000163947" description="tRNA dimethylallyltransferase">
    <location>
        <begin position="1"/>
        <end position="313"/>
    </location>
</feature>
<feature type="region of interest" description="Interaction with substrate tRNA" evidence="1">
    <location>
        <begin position="35"/>
        <end position="38"/>
    </location>
</feature>
<feature type="binding site" evidence="1">
    <location>
        <begin position="10"/>
        <end position="17"/>
    </location>
    <ligand>
        <name>ATP</name>
        <dbReference type="ChEBI" id="CHEBI:30616"/>
    </ligand>
</feature>
<feature type="binding site" evidence="1">
    <location>
        <begin position="12"/>
        <end position="17"/>
    </location>
    <ligand>
        <name>substrate</name>
    </ligand>
</feature>
<feature type="site" description="Interaction with substrate tRNA" evidence="1">
    <location>
        <position position="101"/>
    </location>
</feature>
<protein>
    <recommendedName>
        <fullName evidence="1">tRNA dimethylallyltransferase</fullName>
        <ecNumber evidence="1">2.5.1.75</ecNumber>
    </recommendedName>
    <alternativeName>
        <fullName evidence="1">Dimethylallyl diphosphate:tRNA dimethylallyltransferase</fullName>
        <shortName evidence="1">DMAPP:tRNA dimethylallyltransferase</shortName>
        <shortName evidence="1">DMATase</shortName>
    </alternativeName>
    <alternativeName>
        <fullName evidence="1">Isopentenyl-diphosphate:tRNA isopentenyltransferase</fullName>
        <shortName evidence="1">IPP transferase</shortName>
        <shortName evidence="1">IPPT</shortName>
        <shortName evidence="1">IPTase</shortName>
    </alternativeName>
</protein>
<sequence length="313" mass="36028">MKETVISIVGPTAVGKSLLGIEMAKRFNGEVISGDSTQVYKGMDIGTAKVTKEEMDGIMHHMIDIISPDESFSVADFQLHAKKCIDDVLGRGKLPILVGGSGLYIQAVLYNYNFSEQRRDESFTKKLEEIIEEEGPNQLYTRLKEVDPVQAAKVHPNNHRRLIRALEVYETTGMTMTEYQQQQQLESPYHLILIGLDMDRDVLYDRINQRVDHMIDTGLIEEVRDLIDRGYENCQSMHAIGYKEIIQHISGNQPMEYAIDALKQHSRKYAKRQLTWFRNKMNVQWYKMEPSIIDEKIEFILNDLAGILEEKSN</sequence>
<keyword id="KW-0067">ATP-binding</keyword>
<keyword id="KW-0460">Magnesium</keyword>
<keyword id="KW-0547">Nucleotide-binding</keyword>
<keyword id="KW-1185">Reference proteome</keyword>
<keyword id="KW-0808">Transferase</keyword>
<keyword id="KW-0819">tRNA processing</keyword>
<organism>
    <name type="scientific">Oceanobacillus iheyensis (strain DSM 14371 / CIP 107618 / JCM 11309 / KCTC 3954 / HTE831)</name>
    <dbReference type="NCBI Taxonomy" id="221109"/>
    <lineage>
        <taxon>Bacteria</taxon>
        <taxon>Bacillati</taxon>
        <taxon>Bacillota</taxon>
        <taxon>Bacilli</taxon>
        <taxon>Bacillales</taxon>
        <taxon>Bacillaceae</taxon>
        <taxon>Oceanobacillus</taxon>
    </lineage>
</organism>
<dbReference type="EC" id="2.5.1.75" evidence="1"/>
<dbReference type="EMBL" id="BA000028">
    <property type="protein sequence ID" value="BAC13590.1"/>
    <property type="molecule type" value="Genomic_DNA"/>
</dbReference>
<dbReference type="RefSeq" id="WP_011066034.1">
    <property type="nucleotide sequence ID" value="NC_004193.1"/>
</dbReference>
<dbReference type="SMR" id="Q8CXG5"/>
<dbReference type="STRING" id="221109.gene:10733874"/>
<dbReference type="KEGG" id="oih:OB1634"/>
<dbReference type="eggNOG" id="COG0324">
    <property type="taxonomic scope" value="Bacteria"/>
</dbReference>
<dbReference type="HOGENOM" id="CLU_032616_0_1_9"/>
<dbReference type="OrthoDB" id="9776390at2"/>
<dbReference type="PhylomeDB" id="Q8CXG5"/>
<dbReference type="Proteomes" id="UP000000822">
    <property type="component" value="Chromosome"/>
</dbReference>
<dbReference type="GO" id="GO:0005524">
    <property type="term" value="F:ATP binding"/>
    <property type="evidence" value="ECO:0007669"/>
    <property type="project" value="UniProtKB-UniRule"/>
</dbReference>
<dbReference type="GO" id="GO:0052381">
    <property type="term" value="F:tRNA dimethylallyltransferase activity"/>
    <property type="evidence" value="ECO:0007669"/>
    <property type="project" value="UniProtKB-UniRule"/>
</dbReference>
<dbReference type="GO" id="GO:0006400">
    <property type="term" value="P:tRNA modification"/>
    <property type="evidence" value="ECO:0007669"/>
    <property type="project" value="TreeGrafter"/>
</dbReference>
<dbReference type="FunFam" id="1.10.20.140:FF:000001">
    <property type="entry name" value="tRNA dimethylallyltransferase"/>
    <property type="match status" value="1"/>
</dbReference>
<dbReference type="Gene3D" id="1.10.20.140">
    <property type="match status" value="1"/>
</dbReference>
<dbReference type="Gene3D" id="3.40.50.300">
    <property type="entry name" value="P-loop containing nucleotide triphosphate hydrolases"/>
    <property type="match status" value="1"/>
</dbReference>
<dbReference type="HAMAP" id="MF_00185">
    <property type="entry name" value="IPP_trans"/>
    <property type="match status" value="1"/>
</dbReference>
<dbReference type="InterPro" id="IPR039657">
    <property type="entry name" value="Dimethylallyltransferase"/>
</dbReference>
<dbReference type="InterPro" id="IPR018022">
    <property type="entry name" value="IPT"/>
</dbReference>
<dbReference type="InterPro" id="IPR027417">
    <property type="entry name" value="P-loop_NTPase"/>
</dbReference>
<dbReference type="NCBIfam" id="TIGR00174">
    <property type="entry name" value="miaA"/>
    <property type="match status" value="1"/>
</dbReference>
<dbReference type="PANTHER" id="PTHR11088">
    <property type="entry name" value="TRNA DIMETHYLALLYLTRANSFERASE"/>
    <property type="match status" value="1"/>
</dbReference>
<dbReference type="PANTHER" id="PTHR11088:SF60">
    <property type="entry name" value="TRNA DIMETHYLALLYLTRANSFERASE"/>
    <property type="match status" value="1"/>
</dbReference>
<dbReference type="Pfam" id="PF01715">
    <property type="entry name" value="IPPT"/>
    <property type="match status" value="1"/>
</dbReference>
<dbReference type="SUPFAM" id="SSF52540">
    <property type="entry name" value="P-loop containing nucleoside triphosphate hydrolases"/>
    <property type="match status" value="2"/>
</dbReference>
<comment type="function">
    <text evidence="1">Catalyzes the transfer of a dimethylallyl group onto the adenine at position 37 in tRNAs that read codons beginning with uridine, leading to the formation of N6-(dimethylallyl)adenosine (i(6)A).</text>
</comment>
<comment type="catalytic activity">
    <reaction evidence="1">
        <text>adenosine(37) in tRNA + dimethylallyl diphosphate = N(6)-dimethylallyladenosine(37) in tRNA + diphosphate</text>
        <dbReference type="Rhea" id="RHEA:26482"/>
        <dbReference type="Rhea" id="RHEA-COMP:10162"/>
        <dbReference type="Rhea" id="RHEA-COMP:10375"/>
        <dbReference type="ChEBI" id="CHEBI:33019"/>
        <dbReference type="ChEBI" id="CHEBI:57623"/>
        <dbReference type="ChEBI" id="CHEBI:74411"/>
        <dbReference type="ChEBI" id="CHEBI:74415"/>
        <dbReference type="EC" id="2.5.1.75"/>
    </reaction>
</comment>
<comment type="cofactor">
    <cofactor evidence="1">
        <name>Mg(2+)</name>
        <dbReference type="ChEBI" id="CHEBI:18420"/>
    </cofactor>
</comment>
<comment type="subunit">
    <text evidence="1">Monomer.</text>
</comment>
<comment type="similarity">
    <text evidence="1">Belongs to the IPP transferase family.</text>
</comment>
<gene>
    <name evidence="1" type="primary">miaA</name>
    <name type="ordered locus">OB1634</name>
</gene>
<accession>Q8CXG5</accession>